<gene>
    <name evidence="1" type="primary">hfq</name>
    <name type="ordered locus">BB3170</name>
</gene>
<feature type="chain" id="PRO_0000095624" description="RNA-binding protein Hfq">
    <location>
        <begin position="1"/>
        <end position="78"/>
    </location>
</feature>
<feature type="domain" description="Sm" evidence="2">
    <location>
        <begin position="10"/>
        <end position="69"/>
    </location>
</feature>
<evidence type="ECO:0000255" key="1">
    <source>
        <dbReference type="HAMAP-Rule" id="MF_00436"/>
    </source>
</evidence>
<evidence type="ECO:0000255" key="2">
    <source>
        <dbReference type="PROSITE-ProRule" id="PRU01346"/>
    </source>
</evidence>
<name>HFQ_BORBR</name>
<protein>
    <recommendedName>
        <fullName evidence="1">RNA-binding protein Hfq</fullName>
    </recommendedName>
</protein>
<sequence>MSNKGQTLQDPFLNTLRKEHVPVSIYLVNGIKLQGQIESFDQYVVLLRNTVTQMVYKHAISTVVPARAVNFQVEVPAE</sequence>
<comment type="function">
    <text evidence="1">RNA chaperone that binds small regulatory RNA (sRNAs) and mRNAs to facilitate mRNA translational regulation in response to envelope stress, environmental stress and changes in metabolite concentrations. Also binds with high specificity to tRNAs.</text>
</comment>
<comment type="subunit">
    <text evidence="1">Homohexamer.</text>
</comment>
<comment type="similarity">
    <text evidence="1">Belongs to the Hfq family.</text>
</comment>
<accession>Q7WHN6</accession>
<organism>
    <name type="scientific">Bordetella bronchiseptica (strain ATCC BAA-588 / NCTC 13252 / RB50)</name>
    <name type="common">Alcaligenes bronchisepticus</name>
    <dbReference type="NCBI Taxonomy" id="257310"/>
    <lineage>
        <taxon>Bacteria</taxon>
        <taxon>Pseudomonadati</taxon>
        <taxon>Pseudomonadota</taxon>
        <taxon>Betaproteobacteria</taxon>
        <taxon>Burkholderiales</taxon>
        <taxon>Alcaligenaceae</taxon>
        <taxon>Bordetella</taxon>
    </lineage>
</organism>
<dbReference type="EMBL" id="BX640446">
    <property type="protein sequence ID" value="CAE33662.1"/>
    <property type="molecule type" value="Genomic_DNA"/>
</dbReference>
<dbReference type="RefSeq" id="WP_003810707.1">
    <property type="nucleotide sequence ID" value="NC_002927.3"/>
</dbReference>
<dbReference type="SMR" id="Q7WHN6"/>
<dbReference type="GeneID" id="93204636"/>
<dbReference type="KEGG" id="bbr:BB3170"/>
<dbReference type="eggNOG" id="COG1923">
    <property type="taxonomic scope" value="Bacteria"/>
</dbReference>
<dbReference type="HOGENOM" id="CLU_113688_2_2_4"/>
<dbReference type="Proteomes" id="UP000001027">
    <property type="component" value="Chromosome"/>
</dbReference>
<dbReference type="GO" id="GO:0005829">
    <property type="term" value="C:cytosol"/>
    <property type="evidence" value="ECO:0007669"/>
    <property type="project" value="TreeGrafter"/>
</dbReference>
<dbReference type="GO" id="GO:0003723">
    <property type="term" value="F:RNA binding"/>
    <property type="evidence" value="ECO:0007669"/>
    <property type="project" value="UniProtKB-UniRule"/>
</dbReference>
<dbReference type="GO" id="GO:0006355">
    <property type="term" value="P:regulation of DNA-templated transcription"/>
    <property type="evidence" value="ECO:0007669"/>
    <property type="project" value="InterPro"/>
</dbReference>
<dbReference type="GO" id="GO:0043487">
    <property type="term" value="P:regulation of RNA stability"/>
    <property type="evidence" value="ECO:0007669"/>
    <property type="project" value="TreeGrafter"/>
</dbReference>
<dbReference type="GO" id="GO:0045974">
    <property type="term" value="P:regulation of translation, ncRNA-mediated"/>
    <property type="evidence" value="ECO:0007669"/>
    <property type="project" value="TreeGrafter"/>
</dbReference>
<dbReference type="CDD" id="cd01716">
    <property type="entry name" value="Hfq"/>
    <property type="match status" value="1"/>
</dbReference>
<dbReference type="FunFam" id="2.30.30.100:FF:000001">
    <property type="entry name" value="RNA-binding protein Hfq"/>
    <property type="match status" value="1"/>
</dbReference>
<dbReference type="Gene3D" id="2.30.30.100">
    <property type="match status" value="1"/>
</dbReference>
<dbReference type="HAMAP" id="MF_00436">
    <property type="entry name" value="Hfq"/>
    <property type="match status" value="1"/>
</dbReference>
<dbReference type="InterPro" id="IPR005001">
    <property type="entry name" value="Hfq"/>
</dbReference>
<dbReference type="InterPro" id="IPR010920">
    <property type="entry name" value="LSM_dom_sf"/>
</dbReference>
<dbReference type="InterPro" id="IPR047575">
    <property type="entry name" value="Sm"/>
</dbReference>
<dbReference type="NCBIfam" id="TIGR02383">
    <property type="entry name" value="Hfq"/>
    <property type="match status" value="1"/>
</dbReference>
<dbReference type="NCBIfam" id="NF001602">
    <property type="entry name" value="PRK00395.1"/>
    <property type="match status" value="1"/>
</dbReference>
<dbReference type="PANTHER" id="PTHR34772">
    <property type="entry name" value="RNA-BINDING PROTEIN HFQ"/>
    <property type="match status" value="1"/>
</dbReference>
<dbReference type="PANTHER" id="PTHR34772:SF1">
    <property type="entry name" value="RNA-BINDING PROTEIN HFQ"/>
    <property type="match status" value="1"/>
</dbReference>
<dbReference type="Pfam" id="PF17209">
    <property type="entry name" value="Hfq"/>
    <property type="match status" value="1"/>
</dbReference>
<dbReference type="SUPFAM" id="SSF50182">
    <property type="entry name" value="Sm-like ribonucleoproteins"/>
    <property type="match status" value="1"/>
</dbReference>
<dbReference type="PROSITE" id="PS52002">
    <property type="entry name" value="SM"/>
    <property type="match status" value="1"/>
</dbReference>
<keyword id="KW-0694">RNA-binding</keyword>
<keyword id="KW-0346">Stress response</keyword>
<proteinExistence type="inferred from homology"/>
<reference key="1">
    <citation type="journal article" date="2003" name="Nat. Genet.">
        <title>Comparative analysis of the genome sequences of Bordetella pertussis, Bordetella parapertussis and Bordetella bronchiseptica.</title>
        <authorList>
            <person name="Parkhill J."/>
            <person name="Sebaihia M."/>
            <person name="Preston A."/>
            <person name="Murphy L.D."/>
            <person name="Thomson N.R."/>
            <person name="Harris D.E."/>
            <person name="Holden M.T.G."/>
            <person name="Churcher C.M."/>
            <person name="Bentley S.D."/>
            <person name="Mungall K.L."/>
            <person name="Cerdeno-Tarraga A.-M."/>
            <person name="Temple L."/>
            <person name="James K.D."/>
            <person name="Harris B."/>
            <person name="Quail M.A."/>
            <person name="Achtman M."/>
            <person name="Atkin R."/>
            <person name="Baker S."/>
            <person name="Basham D."/>
            <person name="Bason N."/>
            <person name="Cherevach I."/>
            <person name="Chillingworth T."/>
            <person name="Collins M."/>
            <person name="Cronin A."/>
            <person name="Davis P."/>
            <person name="Doggett J."/>
            <person name="Feltwell T."/>
            <person name="Goble A."/>
            <person name="Hamlin N."/>
            <person name="Hauser H."/>
            <person name="Holroyd S."/>
            <person name="Jagels K."/>
            <person name="Leather S."/>
            <person name="Moule S."/>
            <person name="Norberczak H."/>
            <person name="O'Neil S."/>
            <person name="Ormond D."/>
            <person name="Price C."/>
            <person name="Rabbinowitsch E."/>
            <person name="Rutter S."/>
            <person name="Sanders M."/>
            <person name="Saunders D."/>
            <person name="Seeger K."/>
            <person name="Sharp S."/>
            <person name="Simmonds M."/>
            <person name="Skelton J."/>
            <person name="Squares R."/>
            <person name="Squares S."/>
            <person name="Stevens K."/>
            <person name="Unwin L."/>
            <person name="Whitehead S."/>
            <person name="Barrell B.G."/>
            <person name="Maskell D.J."/>
        </authorList>
    </citation>
    <scope>NUCLEOTIDE SEQUENCE [LARGE SCALE GENOMIC DNA]</scope>
    <source>
        <strain>ATCC BAA-588 / NCTC 13252 / RB50</strain>
    </source>
</reference>